<organism>
    <name type="scientific">Borrelia turicatae (strain 91E135)</name>
    <dbReference type="NCBI Taxonomy" id="314724"/>
    <lineage>
        <taxon>Bacteria</taxon>
        <taxon>Pseudomonadati</taxon>
        <taxon>Spirochaetota</taxon>
        <taxon>Spirochaetia</taxon>
        <taxon>Spirochaetales</taxon>
        <taxon>Borreliaceae</taxon>
        <taxon>Borrelia</taxon>
    </lineage>
</organism>
<protein>
    <recommendedName>
        <fullName evidence="1">Methionyl-tRNA formyltransferase</fullName>
        <ecNumber evidence="1">2.1.2.9</ecNumber>
    </recommendedName>
</protein>
<gene>
    <name evidence="1" type="primary">fmt</name>
    <name type="ordered locus">BT0064</name>
</gene>
<keyword id="KW-0648">Protein biosynthesis</keyword>
<keyword id="KW-1185">Reference proteome</keyword>
<keyword id="KW-0808">Transferase</keyword>
<dbReference type="EC" id="2.1.2.9" evidence="1"/>
<dbReference type="EMBL" id="CP000049">
    <property type="protein sequence ID" value="AAX17406.1"/>
    <property type="molecule type" value="Genomic_DNA"/>
</dbReference>
<dbReference type="RefSeq" id="WP_011772025.1">
    <property type="nucleotide sequence ID" value="NC_008710.1"/>
</dbReference>
<dbReference type="SMR" id="A1QYL4"/>
<dbReference type="KEGG" id="btu:BT0064"/>
<dbReference type="eggNOG" id="COG0223">
    <property type="taxonomic scope" value="Bacteria"/>
</dbReference>
<dbReference type="HOGENOM" id="CLU_033347_1_1_12"/>
<dbReference type="Proteomes" id="UP000001205">
    <property type="component" value="Chromosome"/>
</dbReference>
<dbReference type="GO" id="GO:0005829">
    <property type="term" value="C:cytosol"/>
    <property type="evidence" value="ECO:0007669"/>
    <property type="project" value="TreeGrafter"/>
</dbReference>
<dbReference type="GO" id="GO:0004479">
    <property type="term" value="F:methionyl-tRNA formyltransferase activity"/>
    <property type="evidence" value="ECO:0007669"/>
    <property type="project" value="UniProtKB-UniRule"/>
</dbReference>
<dbReference type="CDD" id="cd08646">
    <property type="entry name" value="FMT_core_Met-tRNA-FMT_N"/>
    <property type="match status" value="1"/>
</dbReference>
<dbReference type="CDD" id="cd08704">
    <property type="entry name" value="Met_tRNA_FMT_C"/>
    <property type="match status" value="1"/>
</dbReference>
<dbReference type="Gene3D" id="3.10.25.10">
    <property type="entry name" value="Formyl transferase, C-terminal domain"/>
    <property type="match status" value="1"/>
</dbReference>
<dbReference type="Gene3D" id="3.40.50.170">
    <property type="entry name" value="Formyl transferase, N-terminal domain"/>
    <property type="match status" value="1"/>
</dbReference>
<dbReference type="HAMAP" id="MF_00182">
    <property type="entry name" value="Formyl_trans"/>
    <property type="match status" value="1"/>
</dbReference>
<dbReference type="InterPro" id="IPR005794">
    <property type="entry name" value="Fmt"/>
</dbReference>
<dbReference type="InterPro" id="IPR005793">
    <property type="entry name" value="Formyl_trans_C"/>
</dbReference>
<dbReference type="InterPro" id="IPR037022">
    <property type="entry name" value="Formyl_trans_C_sf"/>
</dbReference>
<dbReference type="InterPro" id="IPR002376">
    <property type="entry name" value="Formyl_transf_N"/>
</dbReference>
<dbReference type="InterPro" id="IPR036477">
    <property type="entry name" value="Formyl_transf_N_sf"/>
</dbReference>
<dbReference type="InterPro" id="IPR011034">
    <property type="entry name" value="Formyl_transferase-like_C_sf"/>
</dbReference>
<dbReference type="InterPro" id="IPR044135">
    <property type="entry name" value="Met-tRNA-FMT_C"/>
</dbReference>
<dbReference type="InterPro" id="IPR041711">
    <property type="entry name" value="Met-tRNA-FMT_N"/>
</dbReference>
<dbReference type="NCBIfam" id="TIGR00460">
    <property type="entry name" value="fmt"/>
    <property type="match status" value="1"/>
</dbReference>
<dbReference type="PANTHER" id="PTHR11138">
    <property type="entry name" value="METHIONYL-TRNA FORMYLTRANSFERASE"/>
    <property type="match status" value="1"/>
</dbReference>
<dbReference type="PANTHER" id="PTHR11138:SF5">
    <property type="entry name" value="METHIONYL-TRNA FORMYLTRANSFERASE, MITOCHONDRIAL"/>
    <property type="match status" value="1"/>
</dbReference>
<dbReference type="Pfam" id="PF02911">
    <property type="entry name" value="Formyl_trans_C"/>
    <property type="match status" value="1"/>
</dbReference>
<dbReference type="Pfam" id="PF00551">
    <property type="entry name" value="Formyl_trans_N"/>
    <property type="match status" value="1"/>
</dbReference>
<dbReference type="SUPFAM" id="SSF50486">
    <property type="entry name" value="FMT C-terminal domain-like"/>
    <property type="match status" value="1"/>
</dbReference>
<dbReference type="SUPFAM" id="SSF53328">
    <property type="entry name" value="Formyltransferase"/>
    <property type="match status" value="1"/>
</dbReference>
<accession>A1QYL4</accession>
<comment type="function">
    <text evidence="1">Attaches a formyl group to the free amino group of methionyl-tRNA(fMet). The formyl group appears to play a dual role in the initiator identity of N-formylmethionyl-tRNA by promoting its recognition by IF2 and preventing the misappropriation of this tRNA by the elongation apparatus.</text>
</comment>
<comment type="catalytic activity">
    <reaction evidence="1">
        <text>L-methionyl-tRNA(fMet) + (6R)-10-formyltetrahydrofolate = N-formyl-L-methionyl-tRNA(fMet) + (6S)-5,6,7,8-tetrahydrofolate + H(+)</text>
        <dbReference type="Rhea" id="RHEA:24380"/>
        <dbReference type="Rhea" id="RHEA-COMP:9952"/>
        <dbReference type="Rhea" id="RHEA-COMP:9953"/>
        <dbReference type="ChEBI" id="CHEBI:15378"/>
        <dbReference type="ChEBI" id="CHEBI:57453"/>
        <dbReference type="ChEBI" id="CHEBI:78530"/>
        <dbReference type="ChEBI" id="CHEBI:78844"/>
        <dbReference type="ChEBI" id="CHEBI:195366"/>
        <dbReference type="EC" id="2.1.2.9"/>
    </reaction>
</comment>
<comment type="similarity">
    <text evidence="1">Belongs to the Fmt family.</text>
</comment>
<name>FMT_BORT9</name>
<sequence length="309" mass="34645">MRIFFASSDSIALEVLRKVSDHYNVVGVLTAPDKPSGRGLFLKVNDIKVEAINRNITVLDPVVLNSDVIGMVKKLKPDLMLVFSYGKIFRQEFLDIFPMGCINVHPSLLPKYRGPSPIQTAILNGDTIGGITVQKMALEMDSGNILAQSQFEIKSFNTSADIFRYVSLNSFNLVLEALSKLNKGHIGIVQDSNQATYCSFFNKQHRMLNFNLSAFEIKNKINACNPWPLARAKLDKDEIIFHRADFIKTTDYSDQAIGKIVSFDPSKGILVKTEDGILLLLELQRSGRKVVDYKSFYNGNRDLIGKIFS</sequence>
<feature type="chain" id="PRO_1000190009" description="Methionyl-tRNA formyltransferase">
    <location>
        <begin position="1"/>
        <end position="309"/>
    </location>
</feature>
<feature type="binding site" evidence="1">
    <location>
        <begin position="107"/>
        <end position="110"/>
    </location>
    <ligand>
        <name>(6S)-5,6,7,8-tetrahydrofolate</name>
        <dbReference type="ChEBI" id="CHEBI:57453"/>
    </ligand>
</feature>
<proteinExistence type="inferred from homology"/>
<reference key="1">
    <citation type="submission" date="2004-12" db="EMBL/GenBank/DDBJ databases">
        <title>The genome sequence of Borrelia hermsii and Borrelia turicatae: comparative analysis of two agents of endemic N. America relapsing fever.</title>
        <authorList>
            <person name="Porcella S.F."/>
            <person name="Raffel S.J."/>
            <person name="Schrumpf M.E."/>
            <person name="Montgomery B."/>
            <person name="Smith T."/>
            <person name="Schwan T.G."/>
        </authorList>
    </citation>
    <scope>NUCLEOTIDE SEQUENCE [LARGE SCALE GENOMIC DNA]</scope>
    <source>
        <strain>91E135</strain>
    </source>
</reference>
<evidence type="ECO:0000255" key="1">
    <source>
        <dbReference type="HAMAP-Rule" id="MF_00182"/>
    </source>
</evidence>